<evidence type="ECO:0000255" key="1">
    <source>
        <dbReference type="HAMAP-Rule" id="MF_00646"/>
    </source>
</evidence>
<protein>
    <recommendedName>
        <fullName evidence="1">Elongation factor P-like protein</fullName>
    </recommendedName>
</protein>
<gene>
    <name type="ordered locus">PMI0835</name>
</gene>
<proteinExistence type="inferred from homology"/>
<keyword id="KW-1185">Reference proteome</keyword>
<feature type="chain" id="PRO_1000130920" description="Elongation factor P-like protein">
    <location>
        <begin position="1"/>
        <end position="190"/>
    </location>
</feature>
<comment type="similarity">
    <text evidence="1">Belongs to the elongation factor P family.</text>
</comment>
<organism>
    <name type="scientific">Proteus mirabilis (strain HI4320)</name>
    <dbReference type="NCBI Taxonomy" id="529507"/>
    <lineage>
        <taxon>Bacteria</taxon>
        <taxon>Pseudomonadati</taxon>
        <taxon>Pseudomonadota</taxon>
        <taxon>Gammaproteobacteria</taxon>
        <taxon>Enterobacterales</taxon>
        <taxon>Morganellaceae</taxon>
        <taxon>Proteus</taxon>
    </lineage>
</organism>
<reference key="1">
    <citation type="journal article" date="2008" name="J. Bacteriol.">
        <title>Complete genome sequence of uropathogenic Proteus mirabilis, a master of both adherence and motility.</title>
        <authorList>
            <person name="Pearson M.M."/>
            <person name="Sebaihia M."/>
            <person name="Churcher C."/>
            <person name="Quail M.A."/>
            <person name="Seshasayee A.S."/>
            <person name="Luscombe N.M."/>
            <person name="Abdellah Z."/>
            <person name="Arrosmith C."/>
            <person name="Atkin B."/>
            <person name="Chillingworth T."/>
            <person name="Hauser H."/>
            <person name="Jagels K."/>
            <person name="Moule S."/>
            <person name="Mungall K."/>
            <person name="Norbertczak H."/>
            <person name="Rabbinowitsch E."/>
            <person name="Walker D."/>
            <person name="Whithead S."/>
            <person name="Thomson N.R."/>
            <person name="Rather P.N."/>
            <person name="Parkhill J."/>
            <person name="Mobley H.L.T."/>
        </authorList>
    </citation>
    <scope>NUCLEOTIDE SEQUENCE [LARGE SCALE GENOMIC DNA]</scope>
    <source>
        <strain>HI4320</strain>
    </source>
</reference>
<sequence length="190" mass="21358">MAKANEIKRGMAISYNNKLLLVKDIDIQAPSARGASTLYKMRFTDIRTGQKVEERFKGDDILDTINLTRRAVSFSYIDGDEYVFMDNEDYTPYTFKKDQIEEELLFIPEEGLAGMQVLTMDGQVLALELPQTVDMEIIETVPGIKGASASARTKPATLPTGLVIQVPEYLSTGDKIRIHIAERRYMGRAD</sequence>
<name>EFPL_PROMH</name>
<dbReference type="EMBL" id="AM942759">
    <property type="protein sequence ID" value="CAR41898.1"/>
    <property type="molecule type" value="Genomic_DNA"/>
</dbReference>
<dbReference type="SMR" id="B4ETA2"/>
<dbReference type="EnsemblBacteria" id="CAR41898">
    <property type="protein sequence ID" value="CAR41898"/>
    <property type="gene ID" value="PMI0835"/>
</dbReference>
<dbReference type="GeneID" id="6802380"/>
<dbReference type="KEGG" id="pmr:PMI0835"/>
<dbReference type="eggNOG" id="COG0231">
    <property type="taxonomic scope" value="Bacteria"/>
</dbReference>
<dbReference type="HOGENOM" id="CLU_074944_2_0_6"/>
<dbReference type="Proteomes" id="UP000008319">
    <property type="component" value="Chromosome"/>
</dbReference>
<dbReference type="GO" id="GO:0005737">
    <property type="term" value="C:cytoplasm"/>
    <property type="evidence" value="ECO:0007669"/>
    <property type="project" value="InterPro"/>
</dbReference>
<dbReference type="GO" id="GO:0003746">
    <property type="term" value="F:translation elongation factor activity"/>
    <property type="evidence" value="ECO:0007669"/>
    <property type="project" value="UniProtKB-UniRule"/>
</dbReference>
<dbReference type="GO" id="GO:0043043">
    <property type="term" value="P:peptide biosynthetic process"/>
    <property type="evidence" value="ECO:0007669"/>
    <property type="project" value="InterPro"/>
</dbReference>
<dbReference type="CDD" id="cd04470">
    <property type="entry name" value="S1_EF-P_repeat_1"/>
    <property type="match status" value="1"/>
</dbReference>
<dbReference type="CDD" id="cd05794">
    <property type="entry name" value="S1_EF-P_repeat_2"/>
    <property type="match status" value="1"/>
</dbReference>
<dbReference type="FunFam" id="2.40.50.140:FF:000004">
    <property type="entry name" value="Elongation factor P"/>
    <property type="match status" value="1"/>
</dbReference>
<dbReference type="FunFam" id="2.30.30.30:FF:000011">
    <property type="entry name" value="Elongation factor P-like protein"/>
    <property type="match status" value="1"/>
</dbReference>
<dbReference type="FunFam" id="2.40.50.140:FF:000053">
    <property type="entry name" value="Elongation factor P-like protein"/>
    <property type="match status" value="1"/>
</dbReference>
<dbReference type="Gene3D" id="2.30.30.30">
    <property type="match status" value="1"/>
</dbReference>
<dbReference type="Gene3D" id="2.40.50.140">
    <property type="entry name" value="Nucleic acid-binding proteins"/>
    <property type="match status" value="2"/>
</dbReference>
<dbReference type="HAMAP" id="MF_00646">
    <property type="entry name" value="EFP"/>
    <property type="match status" value="1"/>
</dbReference>
<dbReference type="InterPro" id="IPR015365">
    <property type="entry name" value="Elong-fact-P_C"/>
</dbReference>
<dbReference type="InterPro" id="IPR012340">
    <property type="entry name" value="NA-bd_OB-fold"/>
</dbReference>
<dbReference type="InterPro" id="IPR014722">
    <property type="entry name" value="Rib_uL2_dom2"/>
</dbReference>
<dbReference type="InterPro" id="IPR020599">
    <property type="entry name" value="Transl_elong_fac_P/YeiP"/>
</dbReference>
<dbReference type="InterPro" id="IPR013185">
    <property type="entry name" value="Transl_elong_KOW-like"/>
</dbReference>
<dbReference type="InterPro" id="IPR011897">
    <property type="entry name" value="Transl_elong_p-like_YeiP"/>
</dbReference>
<dbReference type="InterPro" id="IPR001059">
    <property type="entry name" value="Transl_elong_P/YeiP_cen"/>
</dbReference>
<dbReference type="InterPro" id="IPR013852">
    <property type="entry name" value="Transl_elong_P/YeiP_CS"/>
</dbReference>
<dbReference type="InterPro" id="IPR008991">
    <property type="entry name" value="Translation_prot_SH3-like_sf"/>
</dbReference>
<dbReference type="NCBIfam" id="NF001810">
    <property type="entry name" value="PRK00529.1"/>
    <property type="match status" value="1"/>
</dbReference>
<dbReference type="NCBIfam" id="NF003392">
    <property type="entry name" value="PRK04542.1"/>
    <property type="match status" value="1"/>
</dbReference>
<dbReference type="NCBIfam" id="TIGR02178">
    <property type="entry name" value="yeiP"/>
    <property type="match status" value="1"/>
</dbReference>
<dbReference type="PANTHER" id="PTHR30053">
    <property type="entry name" value="ELONGATION FACTOR P"/>
    <property type="match status" value="1"/>
</dbReference>
<dbReference type="PANTHER" id="PTHR30053:SF14">
    <property type="entry name" value="TRANSLATION ELONGATION FACTOR KOW-LIKE DOMAIN-CONTAINING PROTEIN"/>
    <property type="match status" value="1"/>
</dbReference>
<dbReference type="Pfam" id="PF01132">
    <property type="entry name" value="EFP"/>
    <property type="match status" value="1"/>
</dbReference>
<dbReference type="Pfam" id="PF08207">
    <property type="entry name" value="EFP_N"/>
    <property type="match status" value="1"/>
</dbReference>
<dbReference type="Pfam" id="PF09285">
    <property type="entry name" value="Elong-fact-P_C"/>
    <property type="match status" value="1"/>
</dbReference>
<dbReference type="PIRSF" id="PIRSF005901">
    <property type="entry name" value="EF-P"/>
    <property type="match status" value="1"/>
</dbReference>
<dbReference type="SMART" id="SM01185">
    <property type="entry name" value="EFP"/>
    <property type="match status" value="1"/>
</dbReference>
<dbReference type="SMART" id="SM00841">
    <property type="entry name" value="Elong-fact-P_C"/>
    <property type="match status" value="1"/>
</dbReference>
<dbReference type="SUPFAM" id="SSF50249">
    <property type="entry name" value="Nucleic acid-binding proteins"/>
    <property type="match status" value="2"/>
</dbReference>
<dbReference type="SUPFAM" id="SSF50104">
    <property type="entry name" value="Translation proteins SH3-like domain"/>
    <property type="match status" value="1"/>
</dbReference>
<dbReference type="PROSITE" id="PS01275">
    <property type="entry name" value="EFP"/>
    <property type="match status" value="1"/>
</dbReference>
<accession>B4ETA2</accession>